<reference key="1">
    <citation type="submission" date="2006-01" db="EMBL/GenBank/DDBJ databases">
        <title>Complete sequence of Novosphingobium aromaticivorans DSM 12444.</title>
        <authorList>
            <consortium name="US DOE Joint Genome Institute"/>
            <person name="Copeland A."/>
            <person name="Lucas S."/>
            <person name="Lapidus A."/>
            <person name="Barry K."/>
            <person name="Detter J.C."/>
            <person name="Glavina T."/>
            <person name="Hammon N."/>
            <person name="Israni S."/>
            <person name="Pitluck S."/>
            <person name="Chain P."/>
            <person name="Malfatti S."/>
            <person name="Shin M."/>
            <person name="Vergez L."/>
            <person name="Schmutz J."/>
            <person name="Larimer F."/>
            <person name="Land M."/>
            <person name="Kyrpides N."/>
            <person name="Ivanova N."/>
            <person name="Fredrickson J."/>
            <person name="Balkwill D."/>
            <person name="Romine M.F."/>
            <person name="Richardson P."/>
        </authorList>
    </citation>
    <scope>NUCLEOTIDE SEQUENCE [LARGE SCALE GENOMIC DNA]</scope>
    <source>
        <strain>ATCC 700278 / DSM 12444 / CCUG 56034 / CIP 105152 / NBRC 16084 / F199</strain>
    </source>
</reference>
<name>NHAA2_NOVAD</name>
<accession>Q2G4Z2</accession>
<evidence type="ECO:0000255" key="1">
    <source>
        <dbReference type="HAMAP-Rule" id="MF_01844"/>
    </source>
</evidence>
<dbReference type="EMBL" id="CP000248">
    <property type="protein sequence ID" value="ABD27081.1"/>
    <property type="molecule type" value="Genomic_DNA"/>
</dbReference>
<dbReference type="RefSeq" id="WP_011446287.1">
    <property type="nucleotide sequence ID" value="NC_007794.1"/>
</dbReference>
<dbReference type="SMR" id="Q2G4Z2"/>
<dbReference type="STRING" id="279238.Saro_2645"/>
<dbReference type="KEGG" id="nar:Saro_2645"/>
<dbReference type="eggNOG" id="COG3004">
    <property type="taxonomic scope" value="Bacteria"/>
</dbReference>
<dbReference type="HOGENOM" id="CLU_015803_1_0_5"/>
<dbReference type="Proteomes" id="UP000009134">
    <property type="component" value="Chromosome"/>
</dbReference>
<dbReference type="GO" id="GO:0005886">
    <property type="term" value="C:plasma membrane"/>
    <property type="evidence" value="ECO:0007669"/>
    <property type="project" value="UniProtKB-SubCell"/>
</dbReference>
<dbReference type="GO" id="GO:0015385">
    <property type="term" value="F:sodium:proton antiporter activity"/>
    <property type="evidence" value="ECO:0007669"/>
    <property type="project" value="TreeGrafter"/>
</dbReference>
<dbReference type="GO" id="GO:0006885">
    <property type="term" value="P:regulation of pH"/>
    <property type="evidence" value="ECO:0007669"/>
    <property type="project" value="InterPro"/>
</dbReference>
<dbReference type="Gene3D" id="1.20.1530.10">
    <property type="entry name" value="Na+/H+ antiporter like domain"/>
    <property type="match status" value="1"/>
</dbReference>
<dbReference type="HAMAP" id="MF_01844">
    <property type="entry name" value="NhaA"/>
    <property type="match status" value="1"/>
</dbReference>
<dbReference type="InterPro" id="IPR023171">
    <property type="entry name" value="Na/H_antiporter_dom_sf"/>
</dbReference>
<dbReference type="InterPro" id="IPR004670">
    <property type="entry name" value="NhaA"/>
</dbReference>
<dbReference type="NCBIfam" id="TIGR00773">
    <property type="entry name" value="NhaA"/>
    <property type="match status" value="1"/>
</dbReference>
<dbReference type="NCBIfam" id="NF007111">
    <property type="entry name" value="PRK09560.1"/>
    <property type="match status" value="1"/>
</dbReference>
<dbReference type="PANTHER" id="PTHR30341:SF0">
    <property type="entry name" value="NA(+)_H(+) ANTIPORTER NHAA"/>
    <property type="match status" value="1"/>
</dbReference>
<dbReference type="PANTHER" id="PTHR30341">
    <property type="entry name" value="SODIUM ION/PROTON ANTIPORTER NHAA-RELATED"/>
    <property type="match status" value="1"/>
</dbReference>
<dbReference type="Pfam" id="PF06965">
    <property type="entry name" value="Na_H_antiport_1"/>
    <property type="match status" value="1"/>
</dbReference>
<feature type="chain" id="PRO_0000334351" description="Na(+)/H(+) antiporter NhaA 2">
    <location>
        <begin position="1"/>
        <end position="390"/>
    </location>
</feature>
<feature type="transmembrane region" description="Helical" evidence="1">
    <location>
        <begin position="23"/>
        <end position="43"/>
    </location>
</feature>
<feature type="transmembrane region" description="Helical" evidence="1">
    <location>
        <begin position="63"/>
        <end position="83"/>
    </location>
</feature>
<feature type="transmembrane region" description="Helical" evidence="1">
    <location>
        <begin position="100"/>
        <end position="120"/>
    </location>
</feature>
<feature type="transmembrane region" description="Helical" evidence="1">
    <location>
        <begin position="129"/>
        <end position="149"/>
    </location>
</feature>
<feature type="transmembrane region" description="Helical" evidence="1">
    <location>
        <begin position="158"/>
        <end position="178"/>
    </location>
</feature>
<feature type="transmembrane region" description="Helical" evidence="1">
    <location>
        <begin position="181"/>
        <end position="201"/>
    </location>
</feature>
<feature type="transmembrane region" description="Helical" evidence="1">
    <location>
        <begin position="208"/>
        <end position="228"/>
    </location>
</feature>
<feature type="transmembrane region" description="Helical" evidence="1">
    <location>
        <begin position="265"/>
        <end position="285"/>
    </location>
</feature>
<feature type="transmembrane region" description="Helical" evidence="1">
    <location>
        <begin position="293"/>
        <end position="313"/>
    </location>
</feature>
<feature type="transmembrane region" description="Helical" evidence="1">
    <location>
        <begin position="331"/>
        <end position="351"/>
    </location>
</feature>
<feature type="transmembrane region" description="Helical" evidence="1">
    <location>
        <begin position="362"/>
        <end position="382"/>
    </location>
</feature>
<gene>
    <name evidence="1" type="primary">nhaA2</name>
    <name type="ordered locus">Saro_2645</name>
</gene>
<proteinExistence type="inferred from homology"/>
<organism>
    <name type="scientific">Novosphingobium aromaticivorans (strain ATCC 700278 / DSM 12444 / CCUG 56034 / CIP 105152 / NBRC 16084 / F199)</name>
    <dbReference type="NCBI Taxonomy" id="279238"/>
    <lineage>
        <taxon>Bacteria</taxon>
        <taxon>Pseudomonadati</taxon>
        <taxon>Pseudomonadota</taxon>
        <taxon>Alphaproteobacteria</taxon>
        <taxon>Sphingomonadales</taxon>
        <taxon>Sphingomonadaceae</taxon>
        <taxon>Novosphingobium</taxon>
    </lineage>
</organism>
<protein>
    <recommendedName>
        <fullName evidence="1">Na(+)/H(+) antiporter NhaA 2</fullName>
    </recommendedName>
    <alternativeName>
        <fullName evidence="1">Sodium/proton antiporter NhaA 2</fullName>
    </alternativeName>
</protein>
<comment type="function">
    <text evidence="1">Na(+)/H(+) antiporter that extrudes sodium in exchange for external protons.</text>
</comment>
<comment type="catalytic activity">
    <reaction evidence="1">
        <text>Na(+)(in) + 2 H(+)(out) = Na(+)(out) + 2 H(+)(in)</text>
        <dbReference type="Rhea" id="RHEA:29251"/>
        <dbReference type="ChEBI" id="CHEBI:15378"/>
        <dbReference type="ChEBI" id="CHEBI:29101"/>
    </reaction>
    <physiologicalReaction direction="left-to-right" evidence="1">
        <dbReference type="Rhea" id="RHEA:29252"/>
    </physiologicalReaction>
</comment>
<comment type="subcellular location">
    <subcellularLocation>
        <location evidence="1">Cell inner membrane</location>
        <topology evidence="1">Multi-pass membrane protein</topology>
    </subcellularLocation>
</comment>
<comment type="similarity">
    <text evidence="1">Belongs to the NhaA Na(+)/H(+) (TC 2.A.33) antiporter family.</text>
</comment>
<sequence>MAGIEGFAAIRGKLAQSEAAPGIVLIACAALALLIANSPLAAAWHALFHHPLPWTPVAKLDTLHLWINDGLMAVFFFVVGLEIKREVLAGELSDARRRRLPVLAAVAGMAVPALIYLAITAGQPALHRGWAIPSATDIAFAIGVLALVGRGLPPSLRLFLLTVAIVDDLGAVVVIALFYTSGLKLAWLGASALILAALVLVNRMGVRALLPYLAGAVALWYTVLHSGIHATVAGVLAAMTVPLALNRRHDSPLLRLEHALVAPNGFVIVPLFGLANAGVALGADFGESPALPLGIAMGLLLGKQFGILGSILVAERLGFAHRPEGASLRHLWGIALLCGIGFTMSLFIAGLAFPETPMLVEEAKLGILGGSLVSALAGLLVLRGSGRPVV</sequence>
<keyword id="KW-0050">Antiport</keyword>
<keyword id="KW-0997">Cell inner membrane</keyword>
<keyword id="KW-1003">Cell membrane</keyword>
<keyword id="KW-0406">Ion transport</keyword>
<keyword id="KW-0472">Membrane</keyword>
<keyword id="KW-1185">Reference proteome</keyword>
<keyword id="KW-0915">Sodium</keyword>
<keyword id="KW-0739">Sodium transport</keyword>
<keyword id="KW-0812">Transmembrane</keyword>
<keyword id="KW-1133">Transmembrane helix</keyword>
<keyword id="KW-0813">Transport</keyword>